<organism>
    <name type="scientific">African swine fever virus (isolate Tick/South Africa/Pretoriuskop Pr4/1996)</name>
    <name type="common">ASFV</name>
    <dbReference type="NCBI Taxonomy" id="561443"/>
    <lineage>
        <taxon>Viruses</taxon>
        <taxon>Varidnaviria</taxon>
        <taxon>Bamfordvirae</taxon>
        <taxon>Nucleocytoviricota</taxon>
        <taxon>Pokkesviricetes</taxon>
        <taxon>Asfuvirales</taxon>
        <taxon>Asfarviridae</taxon>
        <taxon>Asfivirus</taxon>
        <taxon>African swine fever virus</taxon>
    </lineage>
</organism>
<name>RIR2_ASFP4</name>
<feature type="chain" id="PRO_0000355533" description="Ribonucleoside-diphosphate reductase small chain">
    <location>
        <begin position="1"/>
        <end position="327"/>
    </location>
</feature>
<feature type="active site" evidence="2">
    <location>
        <position position="108"/>
    </location>
</feature>
<feature type="binding site" evidence="2">
    <location>
        <position position="70"/>
    </location>
    <ligand>
        <name>Fe cation</name>
        <dbReference type="ChEBI" id="CHEBI:24875"/>
        <label>1</label>
    </ligand>
</feature>
<feature type="binding site" evidence="2">
    <location>
        <position position="101"/>
    </location>
    <ligand>
        <name>Fe cation</name>
        <dbReference type="ChEBI" id="CHEBI:24875"/>
        <label>1</label>
    </ligand>
</feature>
<feature type="binding site" evidence="1">
    <location>
        <position position="101"/>
    </location>
    <ligand>
        <name>Fe cation</name>
        <dbReference type="ChEBI" id="CHEBI:24875"/>
        <label>2</label>
    </ligand>
</feature>
<feature type="binding site" evidence="2">
    <location>
        <position position="104"/>
    </location>
    <ligand>
        <name>Fe cation</name>
        <dbReference type="ChEBI" id="CHEBI:24875"/>
        <label>1</label>
    </ligand>
</feature>
<feature type="binding site" evidence="1">
    <location>
        <position position="164"/>
    </location>
    <ligand>
        <name>Fe cation</name>
        <dbReference type="ChEBI" id="CHEBI:24875"/>
        <label>2</label>
    </ligand>
</feature>
<feature type="binding site" evidence="1">
    <location>
        <position position="198"/>
    </location>
    <ligand>
        <name>Fe cation</name>
        <dbReference type="ChEBI" id="CHEBI:24875"/>
        <label>2</label>
    </ligand>
</feature>
<feature type="binding site" evidence="1">
    <location>
        <position position="201"/>
    </location>
    <ligand>
        <name>Fe cation</name>
        <dbReference type="ChEBI" id="CHEBI:24875"/>
        <label>2</label>
    </ligand>
</feature>
<proteinExistence type="inferred from homology"/>
<protein>
    <recommendedName>
        <fullName>Ribonucleoside-diphosphate reductase small chain</fullName>
        <ecNumber>1.17.4.1</ecNumber>
    </recommendedName>
    <alternativeName>
        <fullName>Ribonucleotide reductase small subunit</fullName>
    </alternativeName>
</protein>
<organismHost>
    <name type="scientific">Ornithodoros</name>
    <name type="common">relapsing fever ticks</name>
    <dbReference type="NCBI Taxonomy" id="6937"/>
</organismHost>
<organismHost>
    <name type="scientific">Phacochoerus aethiopicus</name>
    <name type="common">Warthog</name>
    <dbReference type="NCBI Taxonomy" id="85517"/>
</organismHost>
<organismHost>
    <name type="scientific">Phacochoerus africanus</name>
    <name type="common">Warthog</name>
    <dbReference type="NCBI Taxonomy" id="41426"/>
</organismHost>
<organismHost>
    <name type="scientific">Potamochoerus larvatus</name>
    <name type="common">Bushpig</name>
    <dbReference type="NCBI Taxonomy" id="273792"/>
</organismHost>
<organismHost>
    <name type="scientific">Sus scrofa</name>
    <name type="common">Pig</name>
    <dbReference type="NCBI Taxonomy" id="9823"/>
</organismHost>
<keyword id="KW-0215">Deoxyribonucleotide synthesis</keyword>
<keyword id="KW-0244">Early protein</keyword>
<keyword id="KW-0408">Iron</keyword>
<keyword id="KW-0479">Metal-binding</keyword>
<keyword id="KW-0560">Oxidoreductase</keyword>
<accession>P0C8I1</accession>
<evidence type="ECO:0000250" key="1"/>
<evidence type="ECO:0000255" key="2">
    <source>
        <dbReference type="PROSITE-ProRule" id="PRU10014"/>
    </source>
</evidence>
<evidence type="ECO:0000305" key="3"/>
<reference key="1">
    <citation type="submission" date="2003-03" db="EMBL/GenBank/DDBJ databases">
        <title>African swine fever virus genomes.</title>
        <authorList>
            <person name="Kutish G.F."/>
            <person name="Rock D.L."/>
        </authorList>
    </citation>
    <scope>NUCLEOTIDE SEQUENCE [LARGE SCALE GENOMIC DNA]</scope>
</reference>
<gene>
    <name type="ordered locus">Pret-056</name>
</gene>
<comment type="function">
    <text evidence="1">Ribonucleoside-diphosphate reductase holoenzyme provides the precursors necessary for viral DNA synthesis. Allows virus growth in non-dividing cells. Catalyzes the biosynthesis of deoxyribonucleotides from the corresponding ribonucleotides (By similarity).</text>
</comment>
<comment type="catalytic activity">
    <reaction evidence="2">
        <text>a 2'-deoxyribonucleoside 5'-diphosphate + [thioredoxin]-disulfide + H2O = a ribonucleoside 5'-diphosphate + [thioredoxin]-dithiol</text>
        <dbReference type="Rhea" id="RHEA:23252"/>
        <dbReference type="Rhea" id="RHEA-COMP:10698"/>
        <dbReference type="Rhea" id="RHEA-COMP:10700"/>
        <dbReference type="ChEBI" id="CHEBI:15377"/>
        <dbReference type="ChEBI" id="CHEBI:29950"/>
        <dbReference type="ChEBI" id="CHEBI:50058"/>
        <dbReference type="ChEBI" id="CHEBI:57930"/>
        <dbReference type="ChEBI" id="CHEBI:73316"/>
        <dbReference type="EC" id="1.17.4.1"/>
    </reaction>
</comment>
<comment type="cofactor">
    <cofactor evidence="1">
        <name>Fe cation</name>
        <dbReference type="ChEBI" id="CHEBI:24875"/>
    </cofactor>
    <text evidence="1">Binds 2 iron ions per subunit.</text>
</comment>
<comment type="subunit">
    <text evidence="1">Heterotetramer composed of a homodimer of the large subunit (R1) and a homodimer of the small subunit (R2). Larger multisubunit protein complex are also active, composed of (R1)n(R2)n (By similarity).</text>
</comment>
<comment type="induction">
    <text evidence="3">Expressed in the early phase of the viral replicative cycle.</text>
</comment>
<comment type="similarity">
    <text evidence="3">Belongs to the ribonucleoside diphosphate reductase small chain family.</text>
</comment>
<dbReference type="EC" id="1.17.4.1"/>
<dbReference type="EMBL" id="AY261363">
    <property type="status" value="NOT_ANNOTATED_CDS"/>
    <property type="molecule type" value="Genomic_DNA"/>
</dbReference>
<dbReference type="SMR" id="P0C8I1"/>
<dbReference type="Proteomes" id="UP000000859">
    <property type="component" value="Segment"/>
</dbReference>
<dbReference type="GO" id="GO:0046872">
    <property type="term" value="F:metal ion binding"/>
    <property type="evidence" value="ECO:0007669"/>
    <property type="project" value="UniProtKB-KW"/>
</dbReference>
<dbReference type="GO" id="GO:0004748">
    <property type="term" value="F:ribonucleoside-diphosphate reductase activity, thioredoxin disulfide as acceptor"/>
    <property type="evidence" value="ECO:0007669"/>
    <property type="project" value="UniProtKB-EC"/>
</dbReference>
<dbReference type="GO" id="GO:0009263">
    <property type="term" value="P:deoxyribonucleotide biosynthetic process"/>
    <property type="evidence" value="ECO:0007669"/>
    <property type="project" value="UniProtKB-KW"/>
</dbReference>
<dbReference type="CDD" id="cd01049">
    <property type="entry name" value="RNRR2"/>
    <property type="match status" value="1"/>
</dbReference>
<dbReference type="Gene3D" id="1.10.620.20">
    <property type="entry name" value="Ribonucleotide Reductase, subunit A"/>
    <property type="match status" value="1"/>
</dbReference>
<dbReference type="InterPro" id="IPR009078">
    <property type="entry name" value="Ferritin-like_SF"/>
</dbReference>
<dbReference type="InterPro" id="IPR012348">
    <property type="entry name" value="RNR-like"/>
</dbReference>
<dbReference type="InterPro" id="IPR033909">
    <property type="entry name" value="RNR_small"/>
</dbReference>
<dbReference type="InterPro" id="IPR030475">
    <property type="entry name" value="RNR_small_AS"/>
</dbReference>
<dbReference type="InterPro" id="IPR000358">
    <property type="entry name" value="RNR_small_fam"/>
</dbReference>
<dbReference type="PANTHER" id="PTHR23409">
    <property type="entry name" value="RIBONUCLEOSIDE-DIPHOSPHATE REDUCTASE SMALL CHAIN"/>
    <property type="match status" value="1"/>
</dbReference>
<dbReference type="PANTHER" id="PTHR23409:SF18">
    <property type="entry name" value="RIBONUCLEOSIDE-DIPHOSPHATE REDUCTASE SUBUNIT M2"/>
    <property type="match status" value="1"/>
</dbReference>
<dbReference type="Pfam" id="PF00268">
    <property type="entry name" value="Ribonuc_red_sm"/>
    <property type="match status" value="1"/>
</dbReference>
<dbReference type="SUPFAM" id="SSF47240">
    <property type="entry name" value="Ferritin-like"/>
    <property type="match status" value="1"/>
</dbReference>
<dbReference type="PROSITE" id="PS00368">
    <property type="entry name" value="RIBORED_SMALL"/>
    <property type="match status" value="1"/>
</dbReference>
<sequence length="327" mass="38958">MEELLIENSHRFTIFPIQHPECWNWYKKLESLTWTAQEVDMCKDIDDWEAMPKSQREFYKQILAFFVVADEIVIENLLTNFMREIKVKEVLYFYTMQAAQECVHSEAYSIQVKTLIPDEKEQQRIFSGIEKHPIIKKMAQWVRQWMDPTKNSLGERLVGFAAVEGILFQNHFVAIQFLKEQNIMPGLVSYNEFISRDEGVHCSFACFLISNYVYNIPEERIIHKILKEAVELVDEFINYAFDKARGRVPGFSKEMLFQYIRYFTDNLCFMMQCKSIYKVGNPFPQMTKFFLNEVEKTNFFELRPTQYQNCVKDDAFAFKLFLNDDDF</sequence>